<dbReference type="EC" id="3.5.4.19" evidence="1"/>
<dbReference type="EMBL" id="CU234118">
    <property type="protein sequence ID" value="CAL76791.1"/>
    <property type="molecule type" value="Genomic_DNA"/>
</dbReference>
<dbReference type="SMR" id="A4YSB5"/>
<dbReference type="STRING" id="114615.BRADO2985"/>
<dbReference type="KEGG" id="bra:BRADO2985"/>
<dbReference type="eggNOG" id="COG0139">
    <property type="taxonomic scope" value="Bacteria"/>
</dbReference>
<dbReference type="HOGENOM" id="CLU_048577_5_0_5"/>
<dbReference type="UniPathway" id="UPA00031">
    <property type="reaction ID" value="UER00008"/>
</dbReference>
<dbReference type="Proteomes" id="UP000001994">
    <property type="component" value="Chromosome"/>
</dbReference>
<dbReference type="GO" id="GO:0005737">
    <property type="term" value="C:cytoplasm"/>
    <property type="evidence" value="ECO:0007669"/>
    <property type="project" value="UniProtKB-SubCell"/>
</dbReference>
<dbReference type="GO" id="GO:0000287">
    <property type="term" value="F:magnesium ion binding"/>
    <property type="evidence" value="ECO:0007669"/>
    <property type="project" value="UniProtKB-UniRule"/>
</dbReference>
<dbReference type="GO" id="GO:0004635">
    <property type="term" value="F:phosphoribosyl-AMP cyclohydrolase activity"/>
    <property type="evidence" value="ECO:0007669"/>
    <property type="project" value="UniProtKB-UniRule"/>
</dbReference>
<dbReference type="GO" id="GO:0008270">
    <property type="term" value="F:zinc ion binding"/>
    <property type="evidence" value="ECO:0007669"/>
    <property type="project" value="UniProtKB-UniRule"/>
</dbReference>
<dbReference type="GO" id="GO:0000105">
    <property type="term" value="P:L-histidine biosynthetic process"/>
    <property type="evidence" value="ECO:0007669"/>
    <property type="project" value="UniProtKB-UniRule"/>
</dbReference>
<dbReference type="FunFam" id="3.10.20.810:FF:000001">
    <property type="entry name" value="Histidine biosynthesis bifunctional protein HisIE"/>
    <property type="match status" value="1"/>
</dbReference>
<dbReference type="Gene3D" id="3.10.20.810">
    <property type="entry name" value="Phosphoribosyl-AMP cyclohydrolase"/>
    <property type="match status" value="1"/>
</dbReference>
<dbReference type="HAMAP" id="MF_01021">
    <property type="entry name" value="HisI"/>
    <property type="match status" value="1"/>
</dbReference>
<dbReference type="InterPro" id="IPR026660">
    <property type="entry name" value="PRA-CH"/>
</dbReference>
<dbReference type="InterPro" id="IPR002496">
    <property type="entry name" value="PRib_AMP_CycHydrolase_dom"/>
</dbReference>
<dbReference type="InterPro" id="IPR038019">
    <property type="entry name" value="PRib_AMP_CycHydrolase_sf"/>
</dbReference>
<dbReference type="NCBIfam" id="NF000768">
    <property type="entry name" value="PRK00051.1"/>
    <property type="match status" value="1"/>
</dbReference>
<dbReference type="PANTHER" id="PTHR42945">
    <property type="entry name" value="HISTIDINE BIOSYNTHESIS BIFUNCTIONAL PROTEIN"/>
    <property type="match status" value="1"/>
</dbReference>
<dbReference type="PANTHER" id="PTHR42945:SF1">
    <property type="entry name" value="HISTIDINE BIOSYNTHESIS BIFUNCTIONAL PROTEIN HIS7"/>
    <property type="match status" value="1"/>
</dbReference>
<dbReference type="Pfam" id="PF01502">
    <property type="entry name" value="PRA-CH"/>
    <property type="match status" value="1"/>
</dbReference>
<dbReference type="SUPFAM" id="SSF141734">
    <property type="entry name" value="HisI-like"/>
    <property type="match status" value="1"/>
</dbReference>
<accession>A4YSB5</accession>
<name>HIS3_BRASO</name>
<reference key="1">
    <citation type="journal article" date="2007" name="Science">
        <title>Legumes symbioses: absence of nod genes in photosynthetic bradyrhizobia.</title>
        <authorList>
            <person name="Giraud E."/>
            <person name="Moulin L."/>
            <person name="Vallenet D."/>
            <person name="Barbe V."/>
            <person name="Cytryn E."/>
            <person name="Avarre J.-C."/>
            <person name="Jaubert M."/>
            <person name="Simon D."/>
            <person name="Cartieaux F."/>
            <person name="Prin Y."/>
            <person name="Bena G."/>
            <person name="Hannibal L."/>
            <person name="Fardoux J."/>
            <person name="Kojadinovic M."/>
            <person name="Vuillet L."/>
            <person name="Lajus A."/>
            <person name="Cruveiller S."/>
            <person name="Rouy Z."/>
            <person name="Mangenot S."/>
            <person name="Segurens B."/>
            <person name="Dossat C."/>
            <person name="Franck W.L."/>
            <person name="Chang W.-S."/>
            <person name="Saunders E."/>
            <person name="Bruce D."/>
            <person name="Richardson P."/>
            <person name="Normand P."/>
            <person name="Dreyfus B."/>
            <person name="Pignol D."/>
            <person name="Stacey G."/>
            <person name="Emerich D."/>
            <person name="Vermeglio A."/>
            <person name="Medigue C."/>
            <person name="Sadowsky M."/>
        </authorList>
    </citation>
    <scope>NUCLEOTIDE SEQUENCE [LARGE SCALE GENOMIC DNA]</scope>
    <source>
        <strain>ORS 278</strain>
    </source>
</reference>
<feature type="chain" id="PRO_0000319684" description="Phosphoribosyl-AMP cyclohydrolase">
    <location>
        <begin position="1"/>
        <end position="130"/>
    </location>
</feature>
<feature type="binding site" evidence="1">
    <location>
        <position position="74"/>
    </location>
    <ligand>
        <name>Mg(2+)</name>
        <dbReference type="ChEBI" id="CHEBI:18420"/>
    </ligand>
</feature>
<feature type="binding site" evidence="1">
    <location>
        <position position="75"/>
    </location>
    <ligand>
        <name>Zn(2+)</name>
        <dbReference type="ChEBI" id="CHEBI:29105"/>
        <note>ligand shared between dimeric partners</note>
    </ligand>
</feature>
<feature type="binding site" evidence="1">
    <location>
        <position position="76"/>
    </location>
    <ligand>
        <name>Mg(2+)</name>
        <dbReference type="ChEBI" id="CHEBI:18420"/>
    </ligand>
</feature>
<feature type="binding site" evidence="1">
    <location>
        <position position="78"/>
    </location>
    <ligand>
        <name>Mg(2+)</name>
        <dbReference type="ChEBI" id="CHEBI:18420"/>
    </ligand>
</feature>
<feature type="binding site" evidence="1">
    <location>
        <position position="91"/>
    </location>
    <ligand>
        <name>Zn(2+)</name>
        <dbReference type="ChEBI" id="CHEBI:29105"/>
        <note>ligand shared between dimeric partners</note>
    </ligand>
</feature>
<feature type="binding site" evidence="1">
    <location>
        <position position="98"/>
    </location>
    <ligand>
        <name>Zn(2+)</name>
        <dbReference type="ChEBI" id="CHEBI:29105"/>
        <note>ligand shared between dimeric partners</note>
    </ligand>
</feature>
<proteinExistence type="inferred from homology"/>
<keyword id="KW-0028">Amino-acid biosynthesis</keyword>
<keyword id="KW-0963">Cytoplasm</keyword>
<keyword id="KW-0368">Histidine biosynthesis</keyword>
<keyword id="KW-0378">Hydrolase</keyword>
<keyword id="KW-0460">Magnesium</keyword>
<keyword id="KW-0479">Metal-binding</keyword>
<keyword id="KW-1185">Reference proteome</keyword>
<keyword id="KW-0862">Zinc</keyword>
<evidence type="ECO:0000255" key="1">
    <source>
        <dbReference type="HAMAP-Rule" id="MF_01021"/>
    </source>
</evidence>
<comment type="function">
    <text evidence="1">Catalyzes the hydrolysis of the adenine ring of phosphoribosyl-AMP.</text>
</comment>
<comment type="catalytic activity">
    <reaction evidence="1">
        <text>1-(5-phospho-beta-D-ribosyl)-5'-AMP + H2O = 1-(5-phospho-beta-D-ribosyl)-5-[(5-phospho-beta-D-ribosylamino)methylideneamino]imidazole-4-carboxamide</text>
        <dbReference type="Rhea" id="RHEA:20049"/>
        <dbReference type="ChEBI" id="CHEBI:15377"/>
        <dbReference type="ChEBI" id="CHEBI:58435"/>
        <dbReference type="ChEBI" id="CHEBI:59457"/>
        <dbReference type="EC" id="3.5.4.19"/>
    </reaction>
</comment>
<comment type="cofactor">
    <cofactor evidence="1">
        <name>Mg(2+)</name>
        <dbReference type="ChEBI" id="CHEBI:18420"/>
    </cofactor>
    <text evidence="1">Binds 1 Mg(2+) ion per subunit.</text>
</comment>
<comment type="cofactor">
    <cofactor evidence="1">
        <name>Zn(2+)</name>
        <dbReference type="ChEBI" id="CHEBI:29105"/>
    </cofactor>
    <text evidence="1">Binds 1 zinc ion per subunit.</text>
</comment>
<comment type="pathway">
    <text evidence="1">Amino-acid biosynthesis; L-histidine biosynthesis; L-histidine from 5-phospho-alpha-D-ribose 1-diphosphate: step 3/9.</text>
</comment>
<comment type="subunit">
    <text evidence="1">Homodimer.</text>
</comment>
<comment type="subcellular location">
    <subcellularLocation>
        <location evidence="1">Cytoplasm</location>
    </subcellularLocation>
</comment>
<comment type="similarity">
    <text evidence="1">Belongs to the PRA-CH family.</text>
</comment>
<protein>
    <recommendedName>
        <fullName evidence="1">Phosphoribosyl-AMP cyclohydrolase</fullName>
        <shortName evidence="1">PRA-CH</shortName>
        <ecNumber evidence="1">3.5.4.19</ecNumber>
    </recommendedName>
</protein>
<sequence length="130" mass="14523">MAFLPKFDSAGLVTCVTTDAVSGDVLMVAHMNDEALRKTIATGEAWYFSRSRNALWRKGESSGQTQRVVEMRTDCDQDAVWLRVEQRGAACHTGRHSCFYRKVEMAGEGGARLVFVDADRLFDPAAVYRK</sequence>
<organism>
    <name type="scientific">Bradyrhizobium sp. (strain ORS 278)</name>
    <dbReference type="NCBI Taxonomy" id="114615"/>
    <lineage>
        <taxon>Bacteria</taxon>
        <taxon>Pseudomonadati</taxon>
        <taxon>Pseudomonadota</taxon>
        <taxon>Alphaproteobacteria</taxon>
        <taxon>Hyphomicrobiales</taxon>
        <taxon>Nitrobacteraceae</taxon>
        <taxon>Bradyrhizobium</taxon>
    </lineage>
</organism>
<gene>
    <name evidence="1" type="primary">hisI</name>
    <name type="ordered locus">BRADO2985</name>
</gene>